<protein>
    <recommendedName>
        <fullName>Uncharacterized protein ML1173</fullName>
    </recommendedName>
</protein>
<proteinExistence type="inferred from homology"/>
<keyword id="KW-1185">Reference proteome</keyword>
<dbReference type="EMBL" id="U00014">
    <property type="protein sequence ID" value="AAA50891.1"/>
    <property type="molecule type" value="Genomic_DNA"/>
</dbReference>
<dbReference type="EMBL" id="AL583921">
    <property type="protein sequence ID" value="CAC31554.1"/>
    <property type="status" value="ALT_INIT"/>
    <property type="molecule type" value="Genomic_DNA"/>
</dbReference>
<dbReference type="PIR" id="G87055">
    <property type="entry name" value="G87055"/>
</dbReference>
<dbReference type="PIR" id="S72789">
    <property type="entry name" value="S72789"/>
</dbReference>
<dbReference type="RefSeq" id="WP_010908179.1">
    <property type="nucleotide sequence ID" value="NC_002677.1"/>
</dbReference>
<dbReference type="SMR" id="P50474"/>
<dbReference type="STRING" id="272631.gene:17575003"/>
<dbReference type="KEGG" id="mle:ML1173"/>
<dbReference type="Leproma" id="ML1173"/>
<dbReference type="eggNOG" id="COG1234">
    <property type="taxonomic scope" value="Bacteria"/>
</dbReference>
<dbReference type="HOGENOM" id="CLU_031317_3_0_11"/>
<dbReference type="Proteomes" id="UP000000806">
    <property type="component" value="Chromosome"/>
</dbReference>
<dbReference type="GO" id="GO:0042781">
    <property type="term" value="F:3'-tRNA processing endoribonuclease activity"/>
    <property type="evidence" value="ECO:0007669"/>
    <property type="project" value="TreeGrafter"/>
</dbReference>
<dbReference type="CDD" id="cd07716">
    <property type="entry name" value="RNaseZ_short-form-like_MBL-fold"/>
    <property type="match status" value="1"/>
</dbReference>
<dbReference type="Gene3D" id="3.60.15.10">
    <property type="entry name" value="Ribonuclease Z/Hydroxyacylglutathione hydrolase-like"/>
    <property type="match status" value="1"/>
</dbReference>
<dbReference type="InterPro" id="IPR054857">
    <property type="entry name" value="cyc_nuc_deg_phdiest"/>
</dbReference>
<dbReference type="InterPro" id="IPR001279">
    <property type="entry name" value="Metallo-B-lactamas"/>
</dbReference>
<dbReference type="InterPro" id="IPR036866">
    <property type="entry name" value="RibonucZ/Hydroxyglut_hydro"/>
</dbReference>
<dbReference type="NCBIfam" id="NF041851">
    <property type="entry name" value="cyc_nuc_deg_phdiest"/>
    <property type="match status" value="1"/>
</dbReference>
<dbReference type="PANTHER" id="PTHR46018:SF4">
    <property type="entry name" value="METALLO-HYDROLASE YHFI-RELATED"/>
    <property type="match status" value="1"/>
</dbReference>
<dbReference type="PANTHER" id="PTHR46018">
    <property type="entry name" value="ZINC PHOSPHODIESTERASE ELAC PROTEIN 1"/>
    <property type="match status" value="1"/>
</dbReference>
<dbReference type="Pfam" id="PF12706">
    <property type="entry name" value="Lactamase_B_2"/>
    <property type="match status" value="1"/>
</dbReference>
<dbReference type="SUPFAM" id="SSF56281">
    <property type="entry name" value="Metallo-hydrolase/oxidoreductase"/>
    <property type="match status" value="1"/>
</dbReference>
<sequence>MSARDSDHLNGQCFPHPGIGHGTVVTVRITVLGCSGSVVGPDSPASGYLLRAPDTPPLVLDFGGGVLGALQRHADPGSVHVLLSHLHADHCLDMPGLFVWRRYHPTRPVGKALLYGPDDTWLRLGAASSPYGGEIDDCSDIFDVRHWVDGEPVPLGALMIMPRLVAHPTESYGLRITDPSGASLVYSGDTGSCDQLVELARGADVFLCEASWTHSPDRPPNLHLSGTEAGRAAAQASVRELLLTHIPPWTSREDVISEAKAEFDGPVHAVVSGETFDIQAPERV</sequence>
<feature type="chain" id="PRO_0000192687" description="Uncharacterized protein ML1173">
    <location>
        <begin position="1"/>
        <end position="284"/>
    </location>
</feature>
<evidence type="ECO:0000305" key="1"/>
<name>Y1173_MYCLE</name>
<gene>
    <name type="ordered locus">ML1173</name>
    <name type="ORF">B1549_C2_211</name>
</gene>
<accession>P50474</accession>
<accession>Q9CC72</accession>
<reference key="1">
    <citation type="submission" date="1994-09" db="EMBL/GenBank/DDBJ databases">
        <authorList>
            <person name="Smith D.R."/>
            <person name="Robison K."/>
        </authorList>
    </citation>
    <scope>NUCLEOTIDE SEQUENCE [GENOMIC DNA]</scope>
</reference>
<reference key="2">
    <citation type="journal article" date="2001" name="Nature">
        <title>Massive gene decay in the leprosy bacillus.</title>
        <authorList>
            <person name="Cole S.T."/>
            <person name="Eiglmeier K."/>
            <person name="Parkhill J."/>
            <person name="James K.D."/>
            <person name="Thomson N.R."/>
            <person name="Wheeler P.R."/>
            <person name="Honore N."/>
            <person name="Garnier T."/>
            <person name="Churcher C.M."/>
            <person name="Harris D.E."/>
            <person name="Mungall K.L."/>
            <person name="Basham D."/>
            <person name="Brown D."/>
            <person name="Chillingworth T."/>
            <person name="Connor R."/>
            <person name="Davies R.M."/>
            <person name="Devlin K."/>
            <person name="Duthoy S."/>
            <person name="Feltwell T."/>
            <person name="Fraser A."/>
            <person name="Hamlin N."/>
            <person name="Holroyd S."/>
            <person name="Hornsby T."/>
            <person name="Jagels K."/>
            <person name="Lacroix C."/>
            <person name="Maclean J."/>
            <person name="Moule S."/>
            <person name="Murphy L.D."/>
            <person name="Oliver K."/>
            <person name="Quail M.A."/>
            <person name="Rajandream M.A."/>
            <person name="Rutherford K.M."/>
            <person name="Rutter S."/>
            <person name="Seeger K."/>
            <person name="Simon S."/>
            <person name="Simmonds M."/>
            <person name="Skelton J."/>
            <person name="Squares R."/>
            <person name="Squares S."/>
            <person name="Stevens K."/>
            <person name="Taylor K."/>
            <person name="Whitehead S."/>
            <person name="Woodward J.R."/>
            <person name="Barrell B.G."/>
        </authorList>
    </citation>
    <scope>NUCLEOTIDE SEQUENCE [LARGE SCALE GENOMIC DNA]</scope>
    <source>
        <strain>TN</strain>
    </source>
</reference>
<organism>
    <name type="scientific">Mycobacterium leprae (strain TN)</name>
    <dbReference type="NCBI Taxonomy" id="272631"/>
    <lineage>
        <taxon>Bacteria</taxon>
        <taxon>Bacillati</taxon>
        <taxon>Actinomycetota</taxon>
        <taxon>Actinomycetes</taxon>
        <taxon>Mycobacteriales</taxon>
        <taxon>Mycobacteriaceae</taxon>
        <taxon>Mycobacterium</taxon>
    </lineage>
</organism>
<comment type="similarity">
    <text evidence="1">Belongs to the AtsA family.</text>
</comment>
<comment type="sequence caution" evidence="1">
    <conflict type="erroneous initiation">
        <sequence resource="EMBL-CDS" id="CAC31554"/>
    </conflict>
</comment>